<comment type="function">
    <text evidence="1">Catalyzes the transfer of a phosphate group to glutamate to form L-glutamate 5-phosphate.</text>
</comment>
<comment type="catalytic activity">
    <reaction evidence="1">
        <text>L-glutamate + ATP = L-glutamyl 5-phosphate + ADP</text>
        <dbReference type="Rhea" id="RHEA:14877"/>
        <dbReference type="ChEBI" id="CHEBI:29985"/>
        <dbReference type="ChEBI" id="CHEBI:30616"/>
        <dbReference type="ChEBI" id="CHEBI:58274"/>
        <dbReference type="ChEBI" id="CHEBI:456216"/>
        <dbReference type="EC" id="2.7.2.11"/>
    </reaction>
</comment>
<comment type="pathway">
    <text evidence="1">Amino-acid biosynthesis; L-proline biosynthesis; L-glutamate 5-semialdehyde from L-glutamate: step 1/2.</text>
</comment>
<comment type="subcellular location">
    <subcellularLocation>
        <location evidence="1">Cytoplasm</location>
    </subcellularLocation>
</comment>
<comment type="similarity">
    <text evidence="1">Belongs to the glutamate 5-kinase family.</text>
</comment>
<reference key="1">
    <citation type="journal article" date="2008" name="J. Bacteriol.">
        <title>The complete genome sequence of Escherichia coli DH10B: insights into the biology of a laboratory workhorse.</title>
        <authorList>
            <person name="Durfee T."/>
            <person name="Nelson R."/>
            <person name="Baldwin S."/>
            <person name="Plunkett G. III"/>
            <person name="Burland V."/>
            <person name="Mau B."/>
            <person name="Petrosino J.F."/>
            <person name="Qin X."/>
            <person name="Muzny D.M."/>
            <person name="Ayele M."/>
            <person name="Gibbs R.A."/>
            <person name="Csorgo B."/>
            <person name="Posfai G."/>
            <person name="Weinstock G.M."/>
            <person name="Blattner F.R."/>
        </authorList>
    </citation>
    <scope>NUCLEOTIDE SEQUENCE [LARGE SCALE GENOMIC DNA]</scope>
    <source>
        <strain>K12 / DH10B</strain>
    </source>
</reference>
<dbReference type="EC" id="2.7.2.11" evidence="1"/>
<dbReference type="EMBL" id="CP000948">
    <property type="protein sequence ID" value="ACB01409.1"/>
    <property type="molecule type" value="Genomic_DNA"/>
</dbReference>
<dbReference type="RefSeq" id="WP_001285288.1">
    <property type="nucleotide sequence ID" value="NC_010473.1"/>
</dbReference>
<dbReference type="SMR" id="B1XDY5"/>
<dbReference type="GeneID" id="93777151"/>
<dbReference type="KEGG" id="ecd:ECDH10B_0224"/>
<dbReference type="HOGENOM" id="CLU_025400_2_0_6"/>
<dbReference type="UniPathway" id="UPA00098">
    <property type="reaction ID" value="UER00359"/>
</dbReference>
<dbReference type="GO" id="GO:0005829">
    <property type="term" value="C:cytosol"/>
    <property type="evidence" value="ECO:0007669"/>
    <property type="project" value="TreeGrafter"/>
</dbReference>
<dbReference type="GO" id="GO:0005524">
    <property type="term" value="F:ATP binding"/>
    <property type="evidence" value="ECO:0007669"/>
    <property type="project" value="UniProtKB-KW"/>
</dbReference>
<dbReference type="GO" id="GO:0004349">
    <property type="term" value="F:glutamate 5-kinase activity"/>
    <property type="evidence" value="ECO:0007669"/>
    <property type="project" value="UniProtKB-UniRule"/>
</dbReference>
<dbReference type="GO" id="GO:0003723">
    <property type="term" value="F:RNA binding"/>
    <property type="evidence" value="ECO:0007669"/>
    <property type="project" value="InterPro"/>
</dbReference>
<dbReference type="GO" id="GO:0055129">
    <property type="term" value="P:L-proline biosynthetic process"/>
    <property type="evidence" value="ECO:0007669"/>
    <property type="project" value="UniProtKB-UniRule"/>
</dbReference>
<dbReference type="CDD" id="cd04242">
    <property type="entry name" value="AAK_G5K_ProB"/>
    <property type="match status" value="1"/>
</dbReference>
<dbReference type="CDD" id="cd21157">
    <property type="entry name" value="PUA_G5K"/>
    <property type="match status" value="1"/>
</dbReference>
<dbReference type="FunFam" id="2.30.130.10:FF:000003">
    <property type="entry name" value="Glutamate 5-kinase"/>
    <property type="match status" value="1"/>
</dbReference>
<dbReference type="FunFam" id="3.40.1160.10:FF:000006">
    <property type="entry name" value="Glutamate 5-kinase"/>
    <property type="match status" value="1"/>
</dbReference>
<dbReference type="Gene3D" id="3.40.1160.10">
    <property type="entry name" value="Acetylglutamate kinase-like"/>
    <property type="match status" value="2"/>
</dbReference>
<dbReference type="Gene3D" id="2.30.130.10">
    <property type="entry name" value="PUA domain"/>
    <property type="match status" value="1"/>
</dbReference>
<dbReference type="HAMAP" id="MF_00456">
    <property type="entry name" value="ProB"/>
    <property type="match status" value="1"/>
</dbReference>
<dbReference type="InterPro" id="IPR036393">
    <property type="entry name" value="AceGlu_kinase-like_sf"/>
</dbReference>
<dbReference type="InterPro" id="IPR001048">
    <property type="entry name" value="Asp/Glu/Uridylate_kinase"/>
</dbReference>
<dbReference type="InterPro" id="IPR041739">
    <property type="entry name" value="G5K_ProB"/>
</dbReference>
<dbReference type="InterPro" id="IPR001057">
    <property type="entry name" value="Glu/AcGlu_kinase"/>
</dbReference>
<dbReference type="InterPro" id="IPR011529">
    <property type="entry name" value="Glu_5kinase"/>
</dbReference>
<dbReference type="InterPro" id="IPR005715">
    <property type="entry name" value="Glu_5kinase/COase_Synthase"/>
</dbReference>
<dbReference type="InterPro" id="IPR019797">
    <property type="entry name" value="Glutamate_5-kinase_CS"/>
</dbReference>
<dbReference type="InterPro" id="IPR002478">
    <property type="entry name" value="PUA"/>
</dbReference>
<dbReference type="InterPro" id="IPR015947">
    <property type="entry name" value="PUA-like_sf"/>
</dbReference>
<dbReference type="InterPro" id="IPR036974">
    <property type="entry name" value="PUA_sf"/>
</dbReference>
<dbReference type="NCBIfam" id="TIGR01027">
    <property type="entry name" value="proB"/>
    <property type="match status" value="1"/>
</dbReference>
<dbReference type="PANTHER" id="PTHR43654">
    <property type="entry name" value="GLUTAMATE 5-KINASE"/>
    <property type="match status" value="1"/>
</dbReference>
<dbReference type="PANTHER" id="PTHR43654:SF1">
    <property type="entry name" value="ISOPENTENYL PHOSPHATE KINASE"/>
    <property type="match status" value="1"/>
</dbReference>
<dbReference type="Pfam" id="PF00696">
    <property type="entry name" value="AA_kinase"/>
    <property type="match status" value="1"/>
</dbReference>
<dbReference type="Pfam" id="PF01472">
    <property type="entry name" value="PUA"/>
    <property type="match status" value="1"/>
</dbReference>
<dbReference type="PIRSF" id="PIRSF000729">
    <property type="entry name" value="GK"/>
    <property type="match status" value="1"/>
</dbReference>
<dbReference type="PRINTS" id="PR00474">
    <property type="entry name" value="GLU5KINASE"/>
</dbReference>
<dbReference type="SMART" id="SM00359">
    <property type="entry name" value="PUA"/>
    <property type="match status" value="1"/>
</dbReference>
<dbReference type="SUPFAM" id="SSF53633">
    <property type="entry name" value="Carbamate kinase-like"/>
    <property type="match status" value="1"/>
</dbReference>
<dbReference type="SUPFAM" id="SSF88697">
    <property type="entry name" value="PUA domain-like"/>
    <property type="match status" value="1"/>
</dbReference>
<dbReference type="PROSITE" id="PS00902">
    <property type="entry name" value="GLUTAMATE_5_KINASE"/>
    <property type="match status" value="1"/>
</dbReference>
<dbReference type="PROSITE" id="PS50890">
    <property type="entry name" value="PUA"/>
    <property type="match status" value="1"/>
</dbReference>
<name>PROB_ECODH</name>
<organism>
    <name type="scientific">Escherichia coli (strain K12 / DH10B)</name>
    <dbReference type="NCBI Taxonomy" id="316385"/>
    <lineage>
        <taxon>Bacteria</taxon>
        <taxon>Pseudomonadati</taxon>
        <taxon>Pseudomonadota</taxon>
        <taxon>Gammaproteobacteria</taxon>
        <taxon>Enterobacterales</taxon>
        <taxon>Enterobacteriaceae</taxon>
        <taxon>Escherichia</taxon>
    </lineage>
</organism>
<feature type="chain" id="PRO_1000125232" description="Glutamate 5-kinase">
    <location>
        <begin position="1"/>
        <end position="367"/>
    </location>
</feature>
<feature type="domain" description="PUA" evidence="1">
    <location>
        <begin position="275"/>
        <end position="353"/>
    </location>
</feature>
<feature type="binding site" evidence="1">
    <location>
        <position position="10"/>
    </location>
    <ligand>
        <name>ATP</name>
        <dbReference type="ChEBI" id="CHEBI:30616"/>
    </ligand>
</feature>
<feature type="binding site" evidence="1">
    <location>
        <position position="50"/>
    </location>
    <ligand>
        <name>substrate</name>
    </ligand>
</feature>
<feature type="binding site" evidence="1">
    <location>
        <position position="137"/>
    </location>
    <ligand>
        <name>substrate</name>
    </ligand>
</feature>
<feature type="binding site" evidence="1">
    <location>
        <position position="149"/>
    </location>
    <ligand>
        <name>substrate</name>
    </ligand>
</feature>
<feature type="binding site" evidence="1">
    <location>
        <begin position="169"/>
        <end position="170"/>
    </location>
    <ligand>
        <name>ATP</name>
        <dbReference type="ChEBI" id="CHEBI:30616"/>
    </ligand>
</feature>
<feature type="binding site" evidence="1">
    <location>
        <begin position="211"/>
        <end position="217"/>
    </location>
    <ligand>
        <name>ATP</name>
        <dbReference type="ChEBI" id="CHEBI:30616"/>
    </ligand>
</feature>
<evidence type="ECO:0000255" key="1">
    <source>
        <dbReference type="HAMAP-Rule" id="MF_00456"/>
    </source>
</evidence>
<sequence length="367" mass="39057">MSDSQTLVVKLGTSVLTGGSRRLNRAHIVELVRQCAQLHAAGHRIVIVTSGAIAAGREHLGYPELPATIASKQLLAAVGQSRLIQLWEQLFSIYGIHVGQMLLTRADMEDRERFLNARDTLRALLDNNIVPVINENDAVATAEIKVGDNDNLSALAAILAGADKLLLLTDQKGLYTADPRSNPQAELIKDVYGIDDALRAIAGDSVSGLGTGGMSTKLQAADVACRAGIDTIIAAGSKPGVIGDVMEGISVGTLFHAQATPLENRKRWIFGAPPAGEITVDEGATAAILERGSSLLPKGIKSVTGNFSRGEVIRICNLEGRDIAHGVSRYNSDALRRIAGHHSQEIDAILGYEYGPVAVHRDDMITR</sequence>
<accession>B1XDY5</accession>
<protein>
    <recommendedName>
        <fullName evidence="1">Glutamate 5-kinase</fullName>
        <ecNumber evidence="1">2.7.2.11</ecNumber>
    </recommendedName>
    <alternativeName>
        <fullName evidence="1">Gamma-glutamyl kinase</fullName>
        <shortName evidence="1">GK</shortName>
    </alternativeName>
</protein>
<proteinExistence type="inferred from homology"/>
<gene>
    <name evidence="1" type="primary">proB</name>
    <name type="ordered locus">ECDH10B_0224</name>
</gene>
<keyword id="KW-0028">Amino-acid biosynthesis</keyword>
<keyword id="KW-0067">ATP-binding</keyword>
<keyword id="KW-0963">Cytoplasm</keyword>
<keyword id="KW-0418">Kinase</keyword>
<keyword id="KW-0547">Nucleotide-binding</keyword>
<keyword id="KW-0641">Proline biosynthesis</keyword>
<keyword id="KW-0808">Transferase</keyword>